<feature type="chain" id="PRO_1000137858" description="Divalent-cation tolerance protein CutA">
    <location>
        <begin position="1"/>
        <end position="119"/>
    </location>
</feature>
<feature type="binding site" evidence="1">
    <location>
        <position position="23"/>
    </location>
    <ligand>
        <name>Cu cation</name>
        <dbReference type="ChEBI" id="CHEBI:23378"/>
    </ligand>
</feature>
<feature type="binding site" evidence="1">
    <location>
        <position position="90"/>
    </location>
    <ligand>
        <name>Cu cation</name>
        <dbReference type="ChEBI" id="CHEBI:23378"/>
    </ligand>
</feature>
<feature type="binding site" evidence="1">
    <location>
        <position position="91"/>
    </location>
    <ligand>
        <name>Cu cation</name>
        <dbReference type="ChEBI" id="CHEBI:23378"/>
    </ligand>
</feature>
<dbReference type="EMBL" id="CP000950">
    <property type="protein sequence ID" value="ACA70093.1"/>
    <property type="molecule type" value="Genomic_DNA"/>
</dbReference>
<dbReference type="RefSeq" id="WP_002209122.1">
    <property type="nucleotide sequence ID" value="NZ_CP009792.1"/>
</dbReference>
<dbReference type="SMR" id="B1JMR6"/>
<dbReference type="GeneID" id="57974262"/>
<dbReference type="KEGG" id="ypy:YPK_3827"/>
<dbReference type="GO" id="GO:0005737">
    <property type="term" value="C:cytoplasm"/>
    <property type="evidence" value="ECO:0007669"/>
    <property type="project" value="UniProtKB-SubCell"/>
</dbReference>
<dbReference type="GO" id="GO:0005507">
    <property type="term" value="F:copper ion binding"/>
    <property type="evidence" value="ECO:0007669"/>
    <property type="project" value="UniProtKB-UniRule"/>
</dbReference>
<dbReference type="GO" id="GO:0010038">
    <property type="term" value="P:response to metal ion"/>
    <property type="evidence" value="ECO:0007669"/>
    <property type="project" value="InterPro"/>
</dbReference>
<dbReference type="FunFam" id="3.30.70.120:FF:000004">
    <property type="entry name" value="Divalent-cation tolerance protein CutA"/>
    <property type="match status" value="1"/>
</dbReference>
<dbReference type="Gene3D" id="3.30.70.120">
    <property type="match status" value="1"/>
</dbReference>
<dbReference type="HAMAP" id="MF_01160">
    <property type="entry name" value="CutA"/>
    <property type="match status" value="1"/>
</dbReference>
<dbReference type="InterPro" id="IPR023700">
    <property type="entry name" value="CutA_Enterobact"/>
</dbReference>
<dbReference type="InterPro" id="IPR004323">
    <property type="entry name" value="Ion_tolerance_CutA"/>
</dbReference>
<dbReference type="InterPro" id="IPR011322">
    <property type="entry name" value="N-reg_PII-like_a/b"/>
</dbReference>
<dbReference type="InterPro" id="IPR015867">
    <property type="entry name" value="N-reg_PII/ATP_PRibTrfase_C"/>
</dbReference>
<dbReference type="NCBIfam" id="NF007930">
    <property type="entry name" value="PRK10645.1"/>
    <property type="match status" value="1"/>
</dbReference>
<dbReference type="PANTHER" id="PTHR23419">
    <property type="entry name" value="DIVALENT CATION TOLERANCE CUTA-RELATED"/>
    <property type="match status" value="1"/>
</dbReference>
<dbReference type="PANTHER" id="PTHR23419:SF8">
    <property type="entry name" value="FI09726P"/>
    <property type="match status" value="1"/>
</dbReference>
<dbReference type="Pfam" id="PF03091">
    <property type="entry name" value="CutA1"/>
    <property type="match status" value="1"/>
</dbReference>
<dbReference type="SUPFAM" id="SSF54913">
    <property type="entry name" value="GlnB-like"/>
    <property type="match status" value="1"/>
</dbReference>
<organism>
    <name type="scientific">Yersinia pseudotuberculosis serotype O:3 (strain YPIII)</name>
    <dbReference type="NCBI Taxonomy" id="502800"/>
    <lineage>
        <taxon>Bacteria</taxon>
        <taxon>Pseudomonadati</taxon>
        <taxon>Pseudomonadota</taxon>
        <taxon>Gammaproteobacteria</taxon>
        <taxon>Enterobacterales</taxon>
        <taxon>Yersiniaceae</taxon>
        <taxon>Yersinia</taxon>
    </lineage>
</organism>
<evidence type="ECO:0000255" key="1">
    <source>
        <dbReference type="HAMAP-Rule" id="MF_01160"/>
    </source>
</evidence>
<gene>
    <name evidence="1" type="primary">cutA</name>
    <name type="ordered locus">YPK_3827</name>
</gene>
<keyword id="KW-0186">Copper</keyword>
<keyword id="KW-0963">Cytoplasm</keyword>
<keyword id="KW-0479">Metal-binding</keyword>
<proteinExistence type="inferred from homology"/>
<accession>B1JMR6</accession>
<sequence>MSDSDAMTDPNAVSYSNAIVVLCTAPDEASAQNLAAQVLGEKLAACVTLLPGATSLYYWEGKLEQEYEVQLLFKSNTDHQQALLTYIKQHHPYQTPELLVLPVRDGDKDYLSWLNASLL</sequence>
<name>CUTA_YERPY</name>
<reference key="1">
    <citation type="submission" date="2008-02" db="EMBL/GenBank/DDBJ databases">
        <title>Complete sequence of Yersinia pseudotuberculosis YPIII.</title>
        <authorList>
            <consortium name="US DOE Joint Genome Institute"/>
            <person name="Copeland A."/>
            <person name="Lucas S."/>
            <person name="Lapidus A."/>
            <person name="Glavina del Rio T."/>
            <person name="Dalin E."/>
            <person name="Tice H."/>
            <person name="Bruce D."/>
            <person name="Goodwin L."/>
            <person name="Pitluck S."/>
            <person name="Munk A.C."/>
            <person name="Brettin T."/>
            <person name="Detter J.C."/>
            <person name="Han C."/>
            <person name="Tapia R."/>
            <person name="Schmutz J."/>
            <person name="Larimer F."/>
            <person name="Land M."/>
            <person name="Hauser L."/>
            <person name="Challacombe J.F."/>
            <person name="Green L."/>
            <person name="Lindler L.E."/>
            <person name="Nikolich M.P."/>
            <person name="Richardson P."/>
        </authorList>
    </citation>
    <scope>NUCLEOTIDE SEQUENCE [LARGE SCALE GENOMIC DNA]</scope>
    <source>
        <strain>YPIII</strain>
    </source>
</reference>
<protein>
    <recommendedName>
        <fullName evidence="1">Divalent-cation tolerance protein CutA</fullName>
    </recommendedName>
</protein>
<comment type="function">
    <text evidence="1">Involved in resistance toward heavy metals.</text>
</comment>
<comment type="cofactor">
    <cofactor evidence="1">
        <name>Cu cation</name>
        <dbReference type="ChEBI" id="CHEBI:23378"/>
    </cofactor>
    <text evidence="1">Binds 1 copper ion per subunit.</text>
</comment>
<comment type="subunit">
    <text evidence="1">Homotrimer.</text>
</comment>
<comment type="subcellular location">
    <subcellularLocation>
        <location evidence="1">Cytoplasm</location>
    </subcellularLocation>
</comment>
<comment type="similarity">
    <text evidence="1">Belongs to the CutA family.</text>
</comment>